<organism>
    <name type="scientific">Pediococcus pentosaceus (strain ATCC 25745 / CCUG 21536 / LMG 10740 / 183-1w)</name>
    <dbReference type="NCBI Taxonomy" id="278197"/>
    <lineage>
        <taxon>Bacteria</taxon>
        <taxon>Bacillati</taxon>
        <taxon>Bacillota</taxon>
        <taxon>Bacilli</taxon>
        <taxon>Lactobacillales</taxon>
        <taxon>Lactobacillaceae</taxon>
        <taxon>Pediococcus</taxon>
    </lineage>
</organism>
<accession>Q03FS1</accession>
<gene>
    <name evidence="1" type="primary">truB</name>
    <name type="ordered locus">PEPE_0892</name>
</gene>
<comment type="function">
    <text evidence="1">Responsible for synthesis of pseudouridine from uracil-55 in the psi GC loop of transfer RNAs.</text>
</comment>
<comment type="catalytic activity">
    <reaction evidence="1">
        <text>uridine(55) in tRNA = pseudouridine(55) in tRNA</text>
        <dbReference type="Rhea" id="RHEA:42532"/>
        <dbReference type="Rhea" id="RHEA-COMP:10101"/>
        <dbReference type="Rhea" id="RHEA-COMP:10102"/>
        <dbReference type="ChEBI" id="CHEBI:65314"/>
        <dbReference type="ChEBI" id="CHEBI:65315"/>
        <dbReference type="EC" id="5.4.99.25"/>
    </reaction>
</comment>
<comment type="similarity">
    <text evidence="1">Belongs to the pseudouridine synthase TruB family. Type 1 subfamily.</text>
</comment>
<keyword id="KW-0413">Isomerase</keyword>
<keyword id="KW-0819">tRNA processing</keyword>
<dbReference type="EC" id="5.4.99.25" evidence="1"/>
<dbReference type="EMBL" id="CP000422">
    <property type="protein sequence ID" value="ABJ67951.1"/>
    <property type="molecule type" value="Genomic_DNA"/>
</dbReference>
<dbReference type="RefSeq" id="WP_011673323.1">
    <property type="nucleotide sequence ID" value="NC_008525.1"/>
</dbReference>
<dbReference type="SMR" id="Q03FS1"/>
<dbReference type="STRING" id="278197.PEPE_0892"/>
<dbReference type="GeneID" id="33062662"/>
<dbReference type="KEGG" id="ppe:PEPE_0892"/>
<dbReference type="eggNOG" id="COG0130">
    <property type="taxonomic scope" value="Bacteria"/>
</dbReference>
<dbReference type="HOGENOM" id="CLU_032087_0_1_9"/>
<dbReference type="OrthoDB" id="9802309at2"/>
<dbReference type="Proteomes" id="UP000000773">
    <property type="component" value="Chromosome"/>
</dbReference>
<dbReference type="GO" id="GO:0003723">
    <property type="term" value="F:RNA binding"/>
    <property type="evidence" value="ECO:0007669"/>
    <property type="project" value="InterPro"/>
</dbReference>
<dbReference type="GO" id="GO:0160148">
    <property type="term" value="F:tRNA pseudouridine(55) synthase activity"/>
    <property type="evidence" value="ECO:0007669"/>
    <property type="project" value="UniProtKB-EC"/>
</dbReference>
<dbReference type="GO" id="GO:1990481">
    <property type="term" value="P:mRNA pseudouridine synthesis"/>
    <property type="evidence" value="ECO:0007669"/>
    <property type="project" value="TreeGrafter"/>
</dbReference>
<dbReference type="GO" id="GO:0031119">
    <property type="term" value="P:tRNA pseudouridine synthesis"/>
    <property type="evidence" value="ECO:0007669"/>
    <property type="project" value="UniProtKB-UniRule"/>
</dbReference>
<dbReference type="CDD" id="cd02573">
    <property type="entry name" value="PseudoU_synth_EcTruB"/>
    <property type="match status" value="1"/>
</dbReference>
<dbReference type="FunFam" id="3.30.2350.10:FF:000011">
    <property type="entry name" value="tRNA pseudouridine synthase B"/>
    <property type="match status" value="1"/>
</dbReference>
<dbReference type="Gene3D" id="3.30.2350.10">
    <property type="entry name" value="Pseudouridine synthase"/>
    <property type="match status" value="1"/>
</dbReference>
<dbReference type="HAMAP" id="MF_01080">
    <property type="entry name" value="TruB_bact"/>
    <property type="match status" value="1"/>
</dbReference>
<dbReference type="InterPro" id="IPR020103">
    <property type="entry name" value="PsdUridine_synth_cat_dom_sf"/>
</dbReference>
<dbReference type="InterPro" id="IPR002501">
    <property type="entry name" value="PsdUridine_synth_N"/>
</dbReference>
<dbReference type="InterPro" id="IPR014780">
    <property type="entry name" value="tRNA_psdUridine_synth_TruB"/>
</dbReference>
<dbReference type="InterPro" id="IPR032819">
    <property type="entry name" value="TruB_C"/>
</dbReference>
<dbReference type="NCBIfam" id="TIGR00431">
    <property type="entry name" value="TruB"/>
    <property type="match status" value="1"/>
</dbReference>
<dbReference type="PANTHER" id="PTHR13767:SF2">
    <property type="entry name" value="PSEUDOURIDYLATE SYNTHASE TRUB1"/>
    <property type="match status" value="1"/>
</dbReference>
<dbReference type="PANTHER" id="PTHR13767">
    <property type="entry name" value="TRNA-PSEUDOURIDINE SYNTHASE"/>
    <property type="match status" value="1"/>
</dbReference>
<dbReference type="Pfam" id="PF16198">
    <property type="entry name" value="TruB_C_2"/>
    <property type="match status" value="1"/>
</dbReference>
<dbReference type="Pfam" id="PF01509">
    <property type="entry name" value="TruB_N"/>
    <property type="match status" value="1"/>
</dbReference>
<dbReference type="SUPFAM" id="SSF55120">
    <property type="entry name" value="Pseudouridine synthase"/>
    <property type="match status" value="1"/>
</dbReference>
<proteinExistence type="inferred from homology"/>
<protein>
    <recommendedName>
        <fullName evidence="1">tRNA pseudouridine synthase B</fullName>
        <ecNumber evidence="1">5.4.99.25</ecNumber>
    </recommendedName>
    <alternativeName>
        <fullName evidence="1">tRNA pseudouridine(55) synthase</fullName>
        <shortName evidence="1">Psi55 synthase</shortName>
    </alternativeName>
    <alternativeName>
        <fullName evidence="1">tRNA pseudouridylate synthase</fullName>
    </alternativeName>
    <alternativeName>
        <fullName evidence="1">tRNA-uridine isomerase</fullName>
    </alternativeName>
</protein>
<reference key="1">
    <citation type="journal article" date="2006" name="Proc. Natl. Acad. Sci. U.S.A.">
        <title>Comparative genomics of the lactic acid bacteria.</title>
        <authorList>
            <person name="Makarova K.S."/>
            <person name="Slesarev A."/>
            <person name="Wolf Y.I."/>
            <person name="Sorokin A."/>
            <person name="Mirkin B."/>
            <person name="Koonin E.V."/>
            <person name="Pavlov A."/>
            <person name="Pavlova N."/>
            <person name="Karamychev V."/>
            <person name="Polouchine N."/>
            <person name="Shakhova V."/>
            <person name="Grigoriev I."/>
            <person name="Lou Y."/>
            <person name="Rohksar D."/>
            <person name="Lucas S."/>
            <person name="Huang K."/>
            <person name="Goodstein D.M."/>
            <person name="Hawkins T."/>
            <person name="Plengvidhya V."/>
            <person name="Welker D."/>
            <person name="Hughes J."/>
            <person name="Goh Y."/>
            <person name="Benson A."/>
            <person name="Baldwin K."/>
            <person name="Lee J.-H."/>
            <person name="Diaz-Muniz I."/>
            <person name="Dosti B."/>
            <person name="Smeianov V."/>
            <person name="Wechter W."/>
            <person name="Barabote R."/>
            <person name="Lorca G."/>
            <person name="Altermann E."/>
            <person name="Barrangou R."/>
            <person name="Ganesan B."/>
            <person name="Xie Y."/>
            <person name="Rawsthorne H."/>
            <person name="Tamir D."/>
            <person name="Parker C."/>
            <person name="Breidt F."/>
            <person name="Broadbent J.R."/>
            <person name="Hutkins R."/>
            <person name="O'Sullivan D."/>
            <person name="Steele J."/>
            <person name="Unlu G."/>
            <person name="Saier M.H. Jr."/>
            <person name="Klaenhammer T."/>
            <person name="Richardson P."/>
            <person name="Kozyavkin S."/>
            <person name="Weimer B.C."/>
            <person name="Mills D.A."/>
        </authorList>
    </citation>
    <scope>NUCLEOTIDE SEQUENCE [LARGE SCALE GENOMIC DNA]</scope>
    <source>
        <strain>ATCC 25745 / CCUG 21536 / LMG 10740 / 183-1w</strain>
    </source>
</reference>
<feature type="chain" id="PRO_1000084635" description="tRNA pseudouridine synthase B">
    <location>
        <begin position="1"/>
        <end position="299"/>
    </location>
</feature>
<feature type="active site" description="Nucleophile" evidence="1">
    <location>
        <position position="38"/>
    </location>
</feature>
<name>TRUB_PEDPA</name>
<sequence>MDGIIPINKERGMTSHDVVAKVRGILRTKKVGHSGTLDPSVDGVLPICVGRATKVVDYLMGFGKVYQGSITLGFSTTTEDLDGEVVETKKLDEPLTDEQINQTLTAMTGTLIQIPPMYSAVKVKGRKLYEYARAGETVERPQRQIKVYDFVQTRPSIFDAEKGQQTIYFKVSCGKGTYVRTLAVDFGRHFGLPAVMSDLSRLASGGFKIEECLTLSDLEQARDEDRLSTVIQPLDRALDNFNTITISDVEWEIVKNGGFLNRPQTDEIIALKYNGNIQALYQYDTNRQNYIPKKMLLVR</sequence>
<evidence type="ECO:0000255" key="1">
    <source>
        <dbReference type="HAMAP-Rule" id="MF_01080"/>
    </source>
</evidence>